<protein>
    <recommendedName>
        <fullName evidence="1">Ribosome-recycling factor</fullName>
        <shortName evidence="1">RRF</shortName>
    </recommendedName>
    <alternativeName>
        <fullName evidence="1">Ribosome-releasing factor</fullName>
    </alternativeName>
</protein>
<name>RRF_MYCPU</name>
<gene>
    <name evidence="1" type="primary">frr</name>
    <name type="ordered locus">MYPU_2190</name>
</gene>
<comment type="function">
    <text evidence="1">Responsible for the release of ribosomes from messenger RNA at the termination of protein biosynthesis. May increase the efficiency of translation by recycling ribosomes from one round of translation to another.</text>
</comment>
<comment type="subcellular location">
    <subcellularLocation>
        <location evidence="1">Cytoplasm</location>
    </subcellularLocation>
</comment>
<comment type="similarity">
    <text evidence="1">Belongs to the RRF family.</text>
</comment>
<feature type="chain" id="PRO_0000167499" description="Ribosome-recycling factor">
    <location>
        <begin position="1"/>
        <end position="187"/>
    </location>
</feature>
<sequence>MDISIINEVFSTLEEKSMNVVSNFEFNLSKISTGRANPQLIKNIKVSYYEELIPLEQISNISVPEPQQLLIKPFDHNITKEIHKSLLLANLDVAIVNEGNQIRLNFPALNTQRRKELVKSLNKFTEQARVSIRLLRQESNKKIKSFKSEISEDDIKKYETKIQTINDSYIEQIDEITKRKERELMEI</sequence>
<reference key="1">
    <citation type="journal article" date="2001" name="Nucleic Acids Res.">
        <title>The complete genome sequence of the murine respiratory pathogen Mycoplasma pulmonis.</title>
        <authorList>
            <person name="Chambaud I."/>
            <person name="Heilig R."/>
            <person name="Ferris S."/>
            <person name="Barbe V."/>
            <person name="Samson D."/>
            <person name="Galisson F."/>
            <person name="Moszer I."/>
            <person name="Dybvig K."/>
            <person name="Wroblewski H."/>
            <person name="Viari A."/>
            <person name="Rocha E.P.C."/>
            <person name="Blanchard A."/>
        </authorList>
    </citation>
    <scope>NUCLEOTIDE SEQUENCE [LARGE SCALE GENOMIC DNA]</scope>
    <source>
        <strain>UAB CTIP</strain>
    </source>
</reference>
<proteinExistence type="inferred from homology"/>
<accession>Q98QZ1</accession>
<keyword id="KW-0963">Cytoplasm</keyword>
<keyword id="KW-0648">Protein biosynthesis</keyword>
<keyword id="KW-1185">Reference proteome</keyword>
<evidence type="ECO:0000255" key="1">
    <source>
        <dbReference type="HAMAP-Rule" id="MF_00040"/>
    </source>
</evidence>
<dbReference type="EMBL" id="AL445563">
    <property type="protein sequence ID" value="CAC13392.1"/>
    <property type="molecule type" value="Genomic_DNA"/>
</dbReference>
<dbReference type="PIR" id="C90539">
    <property type="entry name" value="C90539"/>
</dbReference>
<dbReference type="RefSeq" id="WP_010925023.1">
    <property type="nucleotide sequence ID" value="NC_002771.1"/>
</dbReference>
<dbReference type="SMR" id="Q98QZ1"/>
<dbReference type="STRING" id="272635.gene:17576806"/>
<dbReference type="KEGG" id="mpu:MYPU_2190"/>
<dbReference type="eggNOG" id="COG0233">
    <property type="taxonomic scope" value="Bacteria"/>
</dbReference>
<dbReference type="HOGENOM" id="CLU_073981_2_1_14"/>
<dbReference type="BioCyc" id="MPUL272635:G1GT6-218-MONOMER"/>
<dbReference type="Proteomes" id="UP000000528">
    <property type="component" value="Chromosome"/>
</dbReference>
<dbReference type="GO" id="GO:0005737">
    <property type="term" value="C:cytoplasm"/>
    <property type="evidence" value="ECO:0007669"/>
    <property type="project" value="UniProtKB-SubCell"/>
</dbReference>
<dbReference type="GO" id="GO:0043023">
    <property type="term" value="F:ribosomal large subunit binding"/>
    <property type="evidence" value="ECO:0007669"/>
    <property type="project" value="TreeGrafter"/>
</dbReference>
<dbReference type="GO" id="GO:0006415">
    <property type="term" value="P:translational termination"/>
    <property type="evidence" value="ECO:0007669"/>
    <property type="project" value="UniProtKB-UniRule"/>
</dbReference>
<dbReference type="FunFam" id="3.30.1360.40:FF:000001">
    <property type="entry name" value="Ribosome-recycling factor"/>
    <property type="match status" value="1"/>
</dbReference>
<dbReference type="Gene3D" id="3.30.1360.40">
    <property type="match status" value="1"/>
</dbReference>
<dbReference type="Gene3D" id="1.10.132.20">
    <property type="entry name" value="Ribosome-recycling factor"/>
    <property type="match status" value="1"/>
</dbReference>
<dbReference type="HAMAP" id="MF_00040">
    <property type="entry name" value="RRF"/>
    <property type="match status" value="1"/>
</dbReference>
<dbReference type="InterPro" id="IPR002661">
    <property type="entry name" value="Ribosome_recyc_fac"/>
</dbReference>
<dbReference type="InterPro" id="IPR023584">
    <property type="entry name" value="Ribosome_recyc_fac_dom"/>
</dbReference>
<dbReference type="InterPro" id="IPR036191">
    <property type="entry name" value="RRF_sf"/>
</dbReference>
<dbReference type="NCBIfam" id="TIGR00496">
    <property type="entry name" value="frr"/>
    <property type="match status" value="1"/>
</dbReference>
<dbReference type="PANTHER" id="PTHR20982:SF3">
    <property type="entry name" value="MITOCHONDRIAL RIBOSOME RECYCLING FACTOR PSEUDO 1"/>
    <property type="match status" value="1"/>
</dbReference>
<dbReference type="PANTHER" id="PTHR20982">
    <property type="entry name" value="RIBOSOME RECYCLING FACTOR"/>
    <property type="match status" value="1"/>
</dbReference>
<dbReference type="Pfam" id="PF01765">
    <property type="entry name" value="RRF"/>
    <property type="match status" value="1"/>
</dbReference>
<dbReference type="SUPFAM" id="SSF55194">
    <property type="entry name" value="Ribosome recycling factor, RRF"/>
    <property type="match status" value="1"/>
</dbReference>
<organism>
    <name type="scientific">Mycoplasmopsis pulmonis (strain UAB CTIP)</name>
    <name type="common">Mycoplasma pulmonis</name>
    <dbReference type="NCBI Taxonomy" id="272635"/>
    <lineage>
        <taxon>Bacteria</taxon>
        <taxon>Bacillati</taxon>
        <taxon>Mycoplasmatota</taxon>
        <taxon>Mycoplasmoidales</taxon>
        <taxon>Metamycoplasmataceae</taxon>
        <taxon>Mycoplasmopsis</taxon>
    </lineage>
</organism>